<name>RAB4B_RAT</name>
<organism>
    <name type="scientific">Rattus norvegicus</name>
    <name type="common">Rat</name>
    <dbReference type="NCBI Taxonomy" id="10116"/>
    <lineage>
        <taxon>Eukaryota</taxon>
        <taxon>Metazoa</taxon>
        <taxon>Chordata</taxon>
        <taxon>Craniata</taxon>
        <taxon>Vertebrata</taxon>
        <taxon>Euteleostomi</taxon>
        <taxon>Mammalia</taxon>
        <taxon>Eutheria</taxon>
        <taxon>Euarchontoglires</taxon>
        <taxon>Glires</taxon>
        <taxon>Rodentia</taxon>
        <taxon>Myomorpha</taxon>
        <taxon>Muroidea</taxon>
        <taxon>Muridae</taxon>
        <taxon>Murinae</taxon>
        <taxon>Rattus</taxon>
    </lineage>
</organism>
<keyword id="KW-0007">Acetylation</keyword>
<keyword id="KW-1003">Cell membrane</keyword>
<keyword id="KW-0967">Endosome</keyword>
<keyword id="KW-0342">GTP-binding</keyword>
<keyword id="KW-0378">Hydrolase</keyword>
<keyword id="KW-0449">Lipoprotein</keyword>
<keyword id="KW-0460">Magnesium</keyword>
<keyword id="KW-0472">Membrane</keyword>
<keyword id="KW-0479">Metal-binding</keyword>
<keyword id="KW-0488">Methylation</keyword>
<keyword id="KW-0547">Nucleotide-binding</keyword>
<keyword id="KW-0597">Phosphoprotein</keyword>
<keyword id="KW-0636">Prenylation</keyword>
<keyword id="KW-0653">Protein transport</keyword>
<keyword id="KW-1185">Reference proteome</keyword>
<keyword id="KW-0813">Transport</keyword>
<comment type="function">
    <text evidence="2 3 5">The small GTPases Rab are key regulators of intracellular membrane trafficking, from the formation of transport vesicles to their fusion with membranes. Rabs cycle between an inactive GDP-bound form and an active GTP-bound form that is able to recruit to membranes different set of downstream effectors directly responsible for vesicle formation, movement, tethering and fusion (By similarity). RAB4B mediates endosomal tethering and fusion through the interaction with RUFY1 and RAB14 (By similarity). Acts as a regulator of platelet alpha-granule release during activation and aggregation of platelets (By similarity).</text>
</comment>
<comment type="catalytic activity">
    <reaction evidence="2">
        <text>GTP + H2O = GDP + phosphate + H(+)</text>
        <dbReference type="Rhea" id="RHEA:19669"/>
        <dbReference type="ChEBI" id="CHEBI:15377"/>
        <dbReference type="ChEBI" id="CHEBI:15378"/>
        <dbReference type="ChEBI" id="CHEBI:37565"/>
        <dbReference type="ChEBI" id="CHEBI:43474"/>
        <dbReference type="ChEBI" id="CHEBI:58189"/>
        <dbReference type="EC" id="3.6.5.2"/>
    </reaction>
    <physiologicalReaction direction="left-to-right" evidence="2">
        <dbReference type="Rhea" id="RHEA:19670"/>
    </physiologicalReaction>
</comment>
<comment type="cofactor">
    <cofactor evidence="3">
        <name>Mg(2+)</name>
        <dbReference type="ChEBI" id="CHEBI:18420"/>
    </cofactor>
</comment>
<comment type="activity regulation">
    <text evidence="6">Regulated by guanine nucleotide exchange factors (GEFs) which promote the exchange of bound GDP for free GTP. Regulated by GTPase activating proteins (GAPs) which increase the GTP hydrolysis activity. Inhibited by GDP dissociation inhibitors (GDIs).</text>
</comment>
<comment type="subunit">
    <text evidence="3">Interacts (GTP-bound form) with RUFY1; the interaction allows endosomal tethering and fusion.</text>
</comment>
<comment type="subcellular location">
    <subcellularLocation>
        <location evidence="3">Cell membrane</location>
        <topology evidence="3">Lipid-anchor</topology>
        <orientation evidence="3">Cytoplasmic side</orientation>
    </subcellularLocation>
    <subcellularLocation>
        <location evidence="3">Early endosome membrane</location>
        <topology evidence="3">Lipid-anchor</topology>
        <orientation evidence="3">Cytoplasmic side</orientation>
    </subcellularLocation>
</comment>
<comment type="domain">
    <text evidence="4">Switch 1, switch 2 and the interswitch regions are characteristic of Rab GTPases and mediate the interactions with Rab downstream effectors. The switch regions undergo conformational changes upon nucleotide binding which drives interaction with specific sets of effector proteins, with most effectors only binding to GTP-bound Rab.</text>
</comment>
<comment type="PTM">
    <text evidence="5">Serotonylation of Gln-67 by TGM2 during activation and aggregation of platelets leads to constitutive activation of GTPase activity.</text>
</comment>
<comment type="similarity">
    <text evidence="6">Belongs to the small GTPase superfamily. Rab family.</text>
</comment>
<feature type="initiator methionine" description="Removed" evidence="3">
    <location>
        <position position="1"/>
    </location>
</feature>
<feature type="chain" id="PRO_0000121101" description="Ras-related protein Rab-4B">
    <location>
        <begin position="2"/>
        <end position="213"/>
    </location>
</feature>
<feature type="short sequence motif" description="Switch 1" evidence="4">
    <location>
        <begin position="39"/>
        <end position="44"/>
    </location>
</feature>
<feature type="short sequence motif" description="Switch 2" evidence="4">
    <location>
        <begin position="65"/>
        <end position="74"/>
    </location>
</feature>
<feature type="binding site" evidence="3">
    <location>
        <position position="18"/>
    </location>
    <ligand>
        <name>GDP</name>
        <dbReference type="ChEBI" id="CHEBI:58189"/>
    </ligand>
</feature>
<feature type="binding site" evidence="2">
    <location>
        <position position="18"/>
    </location>
    <ligand>
        <name>GTP</name>
        <dbReference type="ChEBI" id="CHEBI:37565"/>
    </ligand>
</feature>
<feature type="binding site" evidence="3">
    <location>
        <position position="19"/>
    </location>
    <ligand>
        <name>GDP</name>
        <dbReference type="ChEBI" id="CHEBI:58189"/>
    </ligand>
</feature>
<feature type="binding site" evidence="2">
    <location>
        <position position="19"/>
    </location>
    <ligand>
        <name>GTP</name>
        <dbReference type="ChEBI" id="CHEBI:37565"/>
    </ligand>
</feature>
<feature type="binding site" evidence="3">
    <location>
        <position position="20"/>
    </location>
    <ligand>
        <name>GDP</name>
        <dbReference type="ChEBI" id="CHEBI:58189"/>
    </ligand>
</feature>
<feature type="binding site" evidence="2">
    <location>
        <position position="20"/>
    </location>
    <ligand>
        <name>GTP</name>
        <dbReference type="ChEBI" id="CHEBI:37565"/>
    </ligand>
</feature>
<feature type="binding site" evidence="3">
    <location>
        <position position="21"/>
    </location>
    <ligand>
        <name>GDP</name>
        <dbReference type="ChEBI" id="CHEBI:58189"/>
    </ligand>
</feature>
<feature type="binding site" evidence="2">
    <location>
        <position position="21"/>
    </location>
    <ligand>
        <name>GTP</name>
        <dbReference type="ChEBI" id="CHEBI:37565"/>
    </ligand>
</feature>
<feature type="binding site" evidence="3">
    <location>
        <position position="22"/>
    </location>
    <ligand>
        <name>GDP</name>
        <dbReference type="ChEBI" id="CHEBI:58189"/>
    </ligand>
</feature>
<feature type="binding site" evidence="2">
    <location>
        <position position="22"/>
    </location>
    <ligand>
        <name>GTP</name>
        <dbReference type="ChEBI" id="CHEBI:37565"/>
    </ligand>
</feature>
<feature type="binding site" evidence="3">
    <location>
        <position position="22"/>
    </location>
    <ligand>
        <name>Mg(2+)</name>
        <dbReference type="ChEBI" id="CHEBI:18420"/>
    </ligand>
</feature>
<feature type="binding site" evidence="3">
    <location>
        <position position="23"/>
    </location>
    <ligand>
        <name>GDP</name>
        <dbReference type="ChEBI" id="CHEBI:58189"/>
    </ligand>
</feature>
<feature type="binding site" evidence="2">
    <location>
        <position position="23"/>
    </location>
    <ligand>
        <name>GTP</name>
        <dbReference type="ChEBI" id="CHEBI:37565"/>
    </ligand>
</feature>
<feature type="binding site" evidence="2">
    <location>
        <position position="37"/>
    </location>
    <ligand>
        <name>GTP</name>
        <dbReference type="ChEBI" id="CHEBI:37565"/>
    </ligand>
</feature>
<feature type="binding site" evidence="2">
    <location>
        <position position="39"/>
    </location>
    <ligand>
        <name>GTP</name>
        <dbReference type="ChEBI" id="CHEBI:37565"/>
    </ligand>
</feature>
<feature type="binding site" evidence="2">
    <location>
        <position position="40"/>
    </location>
    <ligand>
        <name>GTP</name>
        <dbReference type="ChEBI" id="CHEBI:37565"/>
    </ligand>
</feature>
<feature type="binding site" evidence="2">
    <location>
        <position position="40"/>
    </location>
    <ligand>
        <name>Mg(2+)</name>
        <dbReference type="ChEBI" id="CHEBI:18420"/>
    </ligand>
</feature>
<feature type="binding site" evidence="3">
    <location>
        <position position="63"/>
    </location>
    <ligand>
        <name>Mg(2+)</name>
        <dbReference type="ChEBI" id="CHEBI:18420"/>
    </ligand>
</feature>
<feature type="binding site" evidence="2">
    <location>
        <position position="66"/>
    </location>
    <ligand>
        <name>GTP</name>
        <dbReference type="ChEBI" id="CHEBI:37565"/>
    </ligand>
</feature>
<feature type="binding site" evidence="3">
    <location>
        <position position="121"/>
    </location>
    <ligand>
        <name>GDP</name>
        <dbReference type="ChEBI" id="CHEBI:58189"/>
    </ligand>
</feature>
<feature type="binding site" evidence="2">
    <location>
        <position position="121"/>
    </location>
    <ligand>
        <name>GTP</name>
        <dbReference type="ChEBI" id="CHEBI:37565"/>
    </ligand>
</feature>
<feature type="binding site" evidence="3">
    <location>
        <position position="122"/>
    </location>
    <ligand>
        <name>GDP</name>
        <dbReference type="ChEBI" id="CHEBI:58189"/>
    </ligand>
</feature>
<feature type="binding site" evidence="2">
    <location>
        <position position="122"/>
    </location>
    <ligand>
        <name>GTP</name>
        <dbReference type="ChEBI" id="CHEBI:37565"/>
    </ligand>
</feature>
<feature type="binding site" evidence="3">
    <location>
        <position position="124"/>
    </location>
    <ligand>
        <name>GDP</name>
        <dbReference type="ChEBI" id="CHEBI:58189"/>
    </ligand>
</feature>
<feature type="binding site" evidence="2">
    <location>
        <position position="124"/>
    </location>
    <ligand>
        <name>GTP</name>
        <dbReference type="ChEBI" id="CHEBI:37565"/>
    </ligand>
</feature>
<feature type="binding site" evidence="3">
    <location>
        <position position="152"/>
    </location>
    <ligand>
        <name>GDP</name>
        <dbReference type="ChEBI" id="CHEBI:58189"/>
    </ligand>
</feature>
<feature type="binding site" evidence="2">
    <location>
        <position position="152"/>
    </location>
    <ligand>
        <name>GTP</name>
        <dbReference type="ChEBI" id="CHEBI:37565"/>
    </ligand>
</feature>
<feature type="binding site" evidence="3">
    <location>
        <position position="153"/>
    </location>
    <ligand>
        <name>GDP</name>
        <dbReference type="ChEBI" id="CHEBI:58189"/>
    </ligand>
</feature>
<feature type="binding site" evidence="2">
    <location>
        <position position="153"/>
    </location>
    <ligand>
        <name>GTP</name>
        <dbReference type="ChEBI" id="CHEBI:37565"/>
    </ligand>
</feature>
<feature type="modified residue" description="N-acetylalanine" evidence="3">
    <location>
        <position position="2"/>
    </location>
</feature>
<feature type="modified residue" description="5-glutamyl serotonin" evidence="5">
    <location>
        <position position="67"/>
    </location>
</feature>
<feature type="modified residue" description="Phosphoserine" evidence="2">
    <location>
        <position position="185"/>
    </location>
</feature>
<feature type="modified residue" description="Phosphoserine" evidence="3">
    <location>
        <position position="193"/>
    </location>
</feature>
<feature type="modified residue" description="Cysteine methyl ester" evidence="1">
    <location>
        <position position="213"/>
    </location>
</feature>
<feature type="lipid moiety-binding region" description="S-geranylgeranyl cysteine" evidence="1">
    <location>
        <position position="211"/>
    </location>
</feature>
<feature type="lipid moiety-binding region" description="S-geranylgeranyl cysteine" evidence="1">
    <location>
        <position position="213"/>
    </location>
</feature>
<reference key="1">
    <citation type="submission" date="1995-08" db="EMBL/GenBank/DDBJ databases">
        <authorList>
            <person name="Schuermann A."/>
            <person name="Muehl-Zuerbes P."/>
            <person name="Lie C."/>
            <person name="Joost H.G."/>
        </authorList>
    </citation>
    <scope>NUCLEOTIDE SEQUENCE [MRNA]</scope>
    <source>
        <strain>Sprague-Dawley</strain>
        <tissue>Heart muscle</tissue>
    </source>
</reference>
<gene>
    <name evidence="7" type="primary">Rab4b</name>
</gene>
<sequence>MAETYDFLFKFLVIGSAGTGKSCLLHQFIENKFKQDSNHTIGVEFGSRVVNVGGKTVKLQIWDTAGQERFRSVTRSYYRGAAGALLVYDITSRETYNSLAAWLTDARTLASPNIVVILCGNKKDLDPEREVTFLEASRFAQENELMFLETSALTGENVEEAFLKCARTILNKIDSGELDPERMGSGIQYGDISLRQLRQPRSAQAVAPQPCGC</sequence>
<proteinExistence type="evidence at transcript level"/>
<dbReference type="EC" id="3.6.5.2" evidence="2"/>
<dbReference type="EMBL" id="X78605">
    <property type="protein sequence ID" value="CAA55339.1"/>
    <property type="molecule type" value="mRNA"/>
</dbReference>
<dbReference type="PIR" id="S58279">
    <property type="entry name" value="S58279"/>
</dbReference>
<dbReference type="RefSeq" id="NP_059051.1">
    <property type="nucleotide sequence ID" value="NM_017355.1"/>
</dbReference>
<dbReference type="RefSeq" id="XP_017445097.1">
    <property type="nucleotide sequence ID" value="XM_017589608.1"/>
</dbReference>
<dbReference type="RefSeq" id="XP_063128003.1">
    <property type="nucleotide sequence ID" value="XM_063271933.1"/>
</dbReference>
<dbReference type="SMR" id="P51146"/>
<dbReference type="FunCoup" id="P51146">
    <property type="interactions" value="1533"/>
</dbReference>
<dbReference type="IntAct" id="P51146">
    <property type="interactions" value="1"/>
</dbReference>
<dbReference type="MINT" id="P51146"/>
<dbReference type="STRING" id="10116.ENSRNOP00000002052"/>
<dbReference type="PhosphoSitePlus" id="P51146"/>
<dbReference type="jPOST" id="P51146"/>
<dbReference type="PaxDb" id="10116-ENSRNOP00000002052"/>
<dbReference type="Ensembl" id="ENSRNOT00000002052.4">
    <property type="protein sequence ID" value="ENSRNOP00000002052.3"/>
    <property type="gene ID" value="ENSRNOG00000001500.7"/>
</dbReference>
<dbReference type="GeneID" id="50866"/>
<dbReference type="KEGG" id="rno:50866"/>
<dbReference type="UCSC" id="RGD:620931">
    <property type="organism name" value="rat"/>
</dbReference>
<dbReference type="AGR" id="RGD:620931"/>
<dbReference type="CTD" id="53916"/>
<dbReference type="RGD" id="620931">
    <property type="gene designation" value="Rab4b"/>
</dbReference>
<dbReference type="eggNOG" id="KOG0086">
    <property type="taxonomic scope" value="Eukaryota"/>
</dbReference>
<dbReference type="GeneTree" id="ENSGT00940000159399"/>
<dbReference type="HOGENOM" id="CLU_041217_23_1_1"/>
<dbReference type="InParanoid" id="P51146"/>
<dbReference type="OMA" id="ASQNICI"/>
<dbReference type="OrthoDB" id="7315at9989"/>
<dbReference type="PhylomeDB" id="P51146"/>
<dbReference type="TreeFam" id="TF300032"/>
<dbReference type="Reactome" id="R-RNO-6798695">
    <property type="pathway name" value="Neutrophil degranulation"/>
</dbReference>
<dbReference type="Reactome" id="R-RNO-8873719">
    <property type="pathway name" value="RAB geranylgeranylation"/>
</dbReference>
<dbReference type="Reactome" id="R-RNO-8875656">
    <property type="pathway name" value="MET receptor recycling"/>
</dbReference>
<dbReference type="PRO" id="PR:P51146"/>
<dbReference type="Proteomes" id="UP000002494">
    <property type="component" value="Chromosome 1"/>
</dbReference>
<dbReference type="Bgee" id="ENSRNOG00000001500">
    <property type="expression patterns" value="Expressed in thymus and 20 other cell types or tissues"/>
</dbReference>
<dbReference type="GO" id="GO:0005829">
    <property type="term" value="C:cytosol"/>
    <property type="evidence" value="ECO:0007669"/>
    <property type="project" value="GOC"/>
</dbReference>
<dbReference type="GO" id="GO:0031901">
    <property type="term" value="C:early endosome membrane"/>
    <property type="evidence" value="ECO:0000266"/>
    <property type="project" value="RGD"/>
</dbReference>
<dbReference type="GO" id="GO:0032593">
    <property type="term" value="C:insulin-responsive compartment"/>
    <property type="evidence" value="ECO:0000266"/>
    <property type="project" value="RGD"/>
</dbReference>
<dbReference type="GO" id="GO:0048471">
    <property type="term" value="C:perinuclear region of cytoplasm"/>
    <property type="evidence" value="ECO:0000266"/>
    <property type="project" value="RGD"/>
</dbReference>
<dbReference type="GO" id="GO:0005886">
    <property type="term" value="C:plasma membrane"/>
    <property type="evidence" value="ECO:0007669"/>
    <property type="project" value="UniProtKB-SubCell"/>
</dbReference>
<dbReference type="GO" id="GO:0055037">
    <property type="term" value="C:recycling endosome"/>
    <property type="evidence" value="ECO:0000266"/>
    <property type="project" value="RGD"/>
</dbReference>
<dbReference type="GO" id="GO:0030672">
    <property type="term" value="C:synaptic vesicle membrane"/>
    <property type="evidence" value="ECO:0000314"/>
    <property type="project" value="SynGO"/>
</dbReference>
<dbReference type="GO" id="GO:0003925">
    <property type="term" value="F:G protein activity"/>
    <property type="evidence" value="ECO:0007669"/>
    <property type="project" value="UniProtKB-EC"/>
</dbReference>
<dbReference type="GO" id="GO:0005525">
    <property type="term" value="F:GTP binding"/>
    <property type="evidence" value="ECO:0000318"/>
    <property type="project" value="GO_Central"/>
</dbReference>
<dbReference type="GO" id="GO:0003924">
    <property type="term" value="F:GTPase activity"/>
    <property type="evidence" value="ECO:0000266"/>
    <property type="project" value="RGD"/>
</dbReference>
<dbReference type="GO" id="GO:0046323">
    <property type="term" value="P:D-glucose import"/>
    <property type="evidence" value="ECO:0000266"/>
    <property type="project" value="RGD"/>
</dbReference>
<dbReference type="GO" id="GO:0034498">
    <property type="term" value="P:early endosome to Golgi transport"/>
    <property type="evidence" value="ECO:0000266"/>
    <property type="project" value="RGD"/>
</dbReference>
<dbReference type="GO" id="GO:0034058">
    <property type="term" value="P:endosomal vesicle fusion"/>
    <property type="evidence" value="ECO:0000266"/>
    <property type="project" value="RGD"/>
</dbReference>
<dbReference type="GO" id="GO:0015031">
    <property type="term" value="P:protein transport"/>
    <property type="evidence" value="ECO:0007669"/>
    <property type="project" value="UniProtKB-KW"/>
</dbReference>
<dbReference type="GO" id="GO:0032482">
    <property type="term" value="P:Rab protein signal transduction"/>
    <property type="evidence" value="ECO:0007669"/>
    <property type="project" value="InterPro"/>
</dbReference>
<dbReference type="GO" id="GO:0030100">
    <property type="term" value="P:regulation of endocytosis"/>
    <property type="evidence" value="ECO:0000318"/>
    <property type="project" value="GO_Central"/>
</dbReference>
<dbReference type="GO" id="GO:0016192">
    <property type="term" value="P:vesicle-mediated transport"/>
    <property type="evidence" value="ECO:0000318"/>
    <property type="project" value="GO_Central"/>
</dbReference>
<dbReference type="CDD" id="cd04113">
    <property type="entry name" value="Rab4"/>
    <property type="match status" value="1"/>
</dbReference>
<dbReference type="FunFam" id="3.40.50.300:FF:000280">
    <property type="entry name" value="Putative ras-related protein Rab-4B"/>
    <property type="match status" value="1"/>
</dbReference>
<dbReference type="Gene3D" id="3.40.50.300">
    <property type="entry name" value="P-loop containing nucleotide triphosphate hydrolases"/>
    <property type="match status" value="1"/>
</dbReference>
<dbReference type="InterPro" id="IPR027417">
    <property type="entry name" value="P-loop_NTPase"/>
</dbReference>
<dbReference type="InterPro" id="IPR041819">
    <property type="entry name" value="Rab4"/>
</dbReference>
<dbReference type="InterPro" id="IPR050209">
    <property type="entry name" value="Rab_GTPases_membrane_traffic"/>
</dbReference>
<dbReference type="InterPro" id="IPR005225">
    <property type="entry name" value="Small_GTP-bd"/>
</dbReference>
<dbReference type="InterPro" id="IPR001806">
    <property type="entry name" value="Small_GTPase"/>
</dbReference>
<dbReference type="NCBIfam" id="TIGR00231">
    <property type="entry name" value="small_GTP"/>
    <property type="match status" value="1"/>
</dbReference>
<dbReference type="PANTHER" id="PTHR47979">
    <property type="entry name" value="DRAB11-RELATED"/>
    <property type="match status" value="1"/>
</dbReference>
<dbReference type="Pfam" id="PF00071">
    <property type="entry name" value="Ras"/>
    <property type="match status" value="1"/>
</dbReference>
<dbReference type="PRINTS" id="PR00449">
    <property type="entry name" value="RASTRNSFRMNG"/>
</dbReference>
<dbReference type="SMART" id="SM00175">
    <property type="entry name" value="RAB"/>
    <property type="match status" value="1"/>
</dbReference>
<dbReference type="SMART" id="SM00176">
    <property type="entry name" value="RAN"/>
    <property type="match status" value="1"/>
</dbReference>
<dbReference type="SMART" id="SM00173">
    <property type="entry name" value="RAS"/>
    <property type="match status" value="1"/>
</dbReference>
<dbReference type="SMART" id="SM00174">
    <property type="entry name" value="RHO"/>
    <property type="match status" value="1"/>
</dbReference>
<dbReference type="SUPFAM" id="SSF52540">
    <property type="entry name" value="P-loop containing nucleoside triphosphate hydrolases"/>
    <property type="match status" value="1"/>
</dbReference>
<dbReference type="PROSITE" id="PS51419">
    <property type="entry name" value="RAB"/>
    <property type="match status" value="1"/>
</dbReference>
<protein>
    <recommendedName>
        <fullName>Ras-related protein Rab-4B</fullName>
        <ecNumber evidence="2">3.6.5.2</ecNumber>
    </recommendedName>
</protein>
<accession>P51146</accession>
<evidence type="ECO:0000250" key="1"/>
<evidence type="ECO:0000250" key="2">
    <source>
        <dbReference type="UniProtKB" id="P20338"/>
    </source>
</evidence>
<evidence type="ECO:0000250" key="3">
    <source>
        <dbReference type="UniProtKB" id="P61018"/>
    </source>
</evidence>
<evidence type="ECO:0000250" key="4">
    <source>
        <dbReference type="UniProtKB" id="P61106"/>
    </source>
</evidence>
<evidence type="ECO:0000250" key="5">
    <source>
        <dbReference type="UniProtKB" id="Q91ZR1"/>
    </source>
</evidence>
<evidence type="ECO:0000305" key="6"/>
<evidence type="ECO:0000312" key="7">
    <source>
        <dbReference type="RGD" id="620931"/>
    </source>
</evidence>